<gene>
    <name evidence="1" type="primary">dut</name>
    <name type="ordered locus">RPD_0208</name>
</gene>
<keyword id="KW-0378">Hydrolase</keyword>
<keyword id="KW-0460">Magnesium</keyword>
<keyword id="KW-0479">Metal-binding</keyword>
<keyword id="KW-0546">Nucleotide metabolism</keyword>
<comment type="function">
    <text evidence="1">This enzyme is involved in nucleotide metabolism: it produces dUMP, the immediate precursor of thymidine nucleotides and it decreases the intracellular concentration of dUTP so that uracil cannot be incorporated into DNA.</text>
</comment>
<comment type="catalytic activity">
    <reaction evidence="1">
        <text>dUTP + H2O = dUMP + diphosphate + H(+)</text>
        <dbReference type="Rhea" id="RHEA:10248"/>
        <dbReference type="ChEBI" id="CHEBI:15377"/>
        <dbReference type="ChEBI" id="CHEBI:15378"/>
        <dbReference type="ChEBI" id="CHEBI:33019"/>
        <dbReference type="ChEBI" id="CHEBI:61555"/>
        <dbReference type="ChEBI" id="CHEBI:246422"/>
        <dbReference type="EC" id="3.6.1.23"/>
    </reaction>
</comment>
<comment type="cofactor">
    <cofactor evidence="1">
        <name>Mg(2+)</name>
        <dbReference type="ChEBI" id="CHEBI:18420"/>
    </cofactor>
</comment>
<comment type="pathway">
    <text evidence="1">Pyrimidine metabolism; dUMP biosynthesis; dUMP from dCTP (dUTP route): step 2/2.</text>
</comment>
<comment type="similarity">
    <text evidence="1">Belongs to the dUTPase family.</text>
</comment>
<accession>Q13EP1</accession>
<sequence>MSDTIAVEIKQLPHAEGLPLPAYQSAHAAGLDLCAANSADAPLLLAPGSYVLVPTGLTIALPENYEAQVRPRSGLAAKHGVTVLNAPGTIDADYRGEIGVLLINHGDAPFTIRRGERIAQMVIAPVVRAELIGVETLSETARGVGGFGSTGR</sequence>
<evidence type="ECO:0000255" key="1">
    <source>
        <dbReference type="HAMAP-Rule" id="MF_00116"/>
    </source>
</evidence>
<name>DUT_RHOPS</name>
<protein>
    <recommendedName>
        <fullName evidence="1">Deoxyuridine 5'-triphosphate nucleotidohydrolase</fullName>
        <shortName evidence="1">dUTPase</shortName>
        <ecNumber evidence="1">3.6.1.23</ecNumber>
    </recommendedName>
    <alternativeName>
        <fullName evidence="1">dUTP pyrophosphatase</fullName>
    </alternativeName>
</protein>
<proteinExistence type="inferred from homology"/>
<reference key="1">
    <citation type="submission" date="2006-03" db="EMBL/GenBank/DDBJ databases">
        <title>Complete sequence of Rhodopseudomonas palustris BisB5.</title>
        <authorList>
            <consortium name="US DOE Joint Genome Institute"/>
            <person name="Copeland A."/>
            <person name="Lucas S."/>
            <person name="Lapidus A."/>
            <person name="Barry K."/>
            <person name="Detter J.C."/>
            <person name="Glavina del Rio T."/>
            <person name="Hammon N."/>
            <person name="Israni S."/>
            <person name="Dalin E."/>
            <person name="Tice H."/>
            <person name="Pitluck S."/>
            <person name="Chain P."/>
            <person name="Malfatti S."/>
            <person name="Shin M."/>
            <person name="Vergez L."/>
            <person name="Schmutz J."/>
            <person name="Larimer F."/>
            <person name="Land M."/>
            <person name="Hauser L."/>
            <person name="Pelletier D.A."/>
            <person name="Kyrpides N."/>
            <person name="Lykidis A."/>
            <person name="Oda Y."/>
            <person name="Harwood C.S."/>
            <person name="Richardson P."/>
        </authorList>
    </citation>
    <scope>NUCLEOTIDE SEQUENCE [LARGE SCALE GENOMIC DNA]</scope>
    <source>
        <strain>BisB5</strain>
    </source>
</reference>
<organism>
    <name type="scientific">Rhodopseudomonas palustris (strain BisB5)</name>
    <dbReference type="NCBI Taxonomy" id="316057"/>
    <lineage>
        <taxon>Bacteria</taxon>
        <taxon>Pseudomonadati</taxon>
        <taxon>Pseudomonadota</taxon>
        <taxon>Alphaproteobacteria</taxon>
        <taxon>Hyphomicrobiales</taxon>
        <taxon>Nitrobacteraceae</taxon>
        <taxon>Rhodopseudomonas</taxon>
    </lineage>
</organism>
<feature type="chain" id="PRO_1000015505" description="Deoxyuridine 5'-triphosphate nucleotidohydrolase">
    <location>
        <begin position="1"/>
        <end position="152"/>
    </location>
</feature>
<feature type="binding site" evidence="1">
    <location>
        <begin position="72"/>
        <end position="74"/>
    </location>
    <ligand>
        <name>substrate</name>
    </ligand>
</feature>
<feature type="binding site" evidence="1">
    <location>
        <position position="85"/>
    </location>
    <ligand>
        <name>substrate</name>
    </ligand>
</feature>
<feature type="binding site" evidence="1">
    <location>
        <begin position="89"/>
        <end position="91"/>
    </location>
    <ligand>
        <name>substrate</name>
    </ligand>
</feature>
<dbReference type="EC" id="3.6.1.23" evidence="1"/>
<dbReference type="EMBL" id="CP000283">
    <property type="protein sequence ID" value="ABE37448.1"/>
    <property type="molecule type" value="Genomic_DNA"/>
</dbReference>
<dbReference type="SMR" id="Q13EP1"/>
<dbReference type="STRING" id="316057.RPD_0208"/>
<dbReference type="KEGG" id="rpd:RPD_0208"/>
<dbReference type="eggNOG" id="COG0756">
    <property type="taxonomic scope" value="Bacteria"/>
</dbReference>
<dbReference type="HOGENOM" id="CLU_068508_1_2_5"/>
<dbReference type="BioCyc" id="RPAL316057:RPD_RS01055-MONOMER"/>
<dbReference type="UniPathway" id="UPA00610">
    <property type="reaction ID" value="UER00666"/>
</dbReference>
<dbReference type="Proteomes" id="UP000001818">
    <property type="component" value="Chromosome"/>
</dbReference>
<dbReference type="GO" id="GO:0004170">
    <property type="term" value="F:dUTP diphosphatase activity"/>
    <property type="evidence" value="ECO:0007669"/>
    <property type="project" value="UniProtKB-UniRule"/>
</dbReference>
<dbReference type="GO" id="GO:0000287">
    <property type="term" value="F:magnesium ion binding"/>
    <property type="evidence" value="ECO:0007669"/>
    <property type="project" value="UniProtKB-UniRule"/>
</dbReference>
<dbReference type="GO" id="GO:0006226">
    <property type="term" value="P:dUMP biosynthetic process"/>
    <property type="evidence" value="ECO:0007669"/>
    <property type="project" value="UniProtKB-UniRule"/>
</dbReference>
<dbReference type="GO" id="GO:0046081">
    <property type="term" value="P:dUTP catabolic process"/>
    <property type="evidence" value="ECO:0007669"/>
    <property type="project" value="InterPro"/>
</dbReference>
<dbReference type="CDD" id="cd07557">
    <property type="entry name" value="trimeric_dUTPase"/>
    <property type="match status" value="1"/>
</dbReference>
<dbReference type="FunFam" id="2.70.40.10:FF:000002">
    <property type="entry name" value="dUTP diphosphatase"/>
    <property type="match status" value="1"/>
</dbReference>
<dbReference type="Gene3D" id="2.70.40.10">
    <property type="match status" value="1"/>
</dbReference>
<dbReference type="HAMAP" id="MF_00116">
    <property type="entry name" value="dUTPase_bact"/>
    <property type="match status" value="1"/>
</dbReference>
<dbReference type="InterPro" id="IPR008181">
    <property type="entry name" value="dUTPase"/>
</dbReference>
<dbReference type="InterPro" id="IPR029054">
    <property type="entry name" value="dUTPase-like"/>
</dbReference>
<dbReference type="InterPro" id="IPR036157">
    <property type="entry name" value="dUTPase-like_sf"/>
</dbReference>
<dbReference type="InterPro" id="IPR033704">
    <property type="entry name" value="dUTPase_trimeric"/>
</dbReference>
<dbReference type="NCBIfam" id="TIGR00576">
    <property type="entry name" value="dut"/>
    <property type="match status" value="1"/>
</dbReference>
<dbReference type="NCBIfam" id="NF001862">
    <property type="entry name" value="PRK00601.1"/>
    <property type="match status" value="1"/>
</dbReference>
<dbReference type="PANTHER" id="PTHR11241">
    <property type="entry name" value="DEOXYURIDINE 5'-TRIPHOSPHATE NUCLEOTIDOHYDROLASE"/>
    <property type="match status" value="1"/>
</dbReference>
<dbReference type="PANTHER" id="PTHR11241:SF0">
    <property type="entry name" value="DEOXYURIDINE 5'-TRIPHOSPHATE NUCLEOTIDOHYDROLASE"/>
    <property type="match status" value="1"/>
</dbReference>
<dbReference type="Pfam" id="PF00692">
    <property type="entry name" value="dUTPase"/>
    <property type="match status" value="1"/>
</dbReference>
<dbReference type="SUPFAM" id="SSF51283">
    <property type="entry name" value="dUTPase-like"/>
    <property type="match status" value="1"/>
</dbReference>